<comment type="function">
    <text evidence="4 7 8 9 10 12 13">Nutrient-regulated protein kinase that promotes the activity of at least 6 distinct transport systems for nitrogenous nutrients under conditions of nitrogen catabolite derepression. Under poor nitrogen growth conditions, required for post-Golgi sorting of the general amino acid permease GAP1 and the three known ammonia permeases, MEP1/2/3, to the plasma membrane. Also contributes to the stability and the retention of GAP1 at the plasma membrane. Inversely, promotes the degradation of tryptophan permease TAT2 under the same conditions. Activity is regulated by the TOR signaling pathway via phosphatase SIT4. Although thought to be involved in regulation of GLN3-dependent transcription by nitrogen catabolite repression, this seems to be an indirect effect from the reduced uptake of the nitrogen-repressing compound.</text>
</comment>
<comment type="catalytic activity">
    <reaction>
        <text>L-seryl-[protein] + ATP = O-phospho-L-seryl-[protein] + ADP + H(+)</text>
        <dbReference type="Rhea" id="RHEA:17989"/>
        <dbReference type="Rhea" id="RHEA-COMP:9863"/>
        <dbReference type="Rhea" id="RHEA-COMP:11604"/>
        <dbReference type="ChEBI" id="CHEBI:15378"/>
        <dbReference type="ChEBI" id="CHEBI:29999"/>
        <dbReference type="ChEBI" id="CHEBI:30616"/>
        <dbReference type="ChEBI" id="CHEBI:83421"/>
        <dbReference type="ChEBI" id="CHEBI:456216"/>
        <dbReference type="EC" id="2.7.11.1"/>
    </reaction>
</comment>
<comment type="catalytic activity">
    <reaction>
        <text>L-threonyl-[protein] + ATP = O-phospho-L-threonyl-[protein] + ADP + H(+)</text>
        <dbReference type="Rhea" id="RHEA:46608"/>
        <dbReference type="Rhea" id="RHEA-COMP:11060"/>
        <dbReference type="Rhea" id="RHEA-COMP:11605"/>
        <dbReference type="ChEBI" id="CHEBI:15378"/>
        <dbReference type="ChEBI" id="CHEBI:30013"/>
        <dbReference type="ChEBI" id="CHEBI:30616"/>
        <dbReference type="ChEBI" id="CHEBI:61977"/>
        <dbReference type="ChEBI" id="CHEBI:456216"/>
        <dbReference type="EC" id="2.7.11.1"/>
    </reaction>
</comment>
<comment type="activity regulation">
    <text>Dephosphorylation by SIT4 activates NPR1 kinase activity.</text>
</comment>
<comment type="subunit">
    <text evidence="5">Interacts with TIP41.</text>
</comment>
<comment type="interaction">
    <interactant intactId="EBI-12207">
        <id>P22211</id>
    </interactant>
    <interactant intactId="EBI-330">
        <id>P15442</id>
        <label>GCN2</label>
    </interactant>
    <organismsDiffer>false</organismsDiffer>
    <experiments>2</experiments>
</comment>
<comment type="interaction">
    <interactant intactId="EBI-12207">
        <id>P22211</id>
    </interactant>
    <interactant intactId="EBI-17516">
        <id>P06782</id>
        <label>SNF1</label>
    </interactant>
    <organismsDiffer>false</organismsDiffer>
    <experiments>3</experiments>
</comment>
<comment type="interaction">
    <interactant intactId="EBI-12207">
        <id>P22211</id>
    </interactant>
    <interactant intactId="EBI-19374">
        <id>P35169</id>
        <label>TOR1</label>
    </interactant>
    <organismsDiffer>false</organismsDiffer>
    <experiments>2</experiments>
</comment>
<comment type="subcellular location">
    <subcellularLocation>
        <location evidence="4">Cytoplasm</location>
    </subcellularLocation>
    <text>Appears to be more concentrated in punctate structures reminiscent of the Golgi or of an endosomal compartment.</text>
</comment>
<comment type="PTM">
    <text evidence="11">Hyperphosphorylated in nitrogen-rich growth medium. Nitrogen limitation (or rapamycin treatment) leads to substantial, though not complete dephosphorylation. Autophosphorylation plays only a minor role and seems not to be regulated by the quality of the nitrogen source.</text>
</comment>
<comment type="miscellaneous">
    <text evidence="6">Present with 284 molecules/cell in log phase SD medium.</text>
</comment>
<comment type="similarity">
    <text evidence="1">Belongs to the protein kinase superfamily. Ser/Thr protein kinase family.</text>
</comment>
<sequence>MSSLTRLLQEKRKNETSNSSPRTSADTLTTTPESQSLDLHSRNKSSSHIGSVSNSSSSDRNRANVPVPGSVTTVTQIYSEEDSSSTAGSSLDDRNQFSSSFLNANFAHTASFYGTSAQSRDRFGSLINDQGTAGLSSHGGSFAAQNRITSRLSTTSHTSGRAIPSLSSSIPYSVPNSNKDNNSSNSNSSSLSSSWLETYAGGMPNNISAIDSNVISSPKVDSVEPRFVISKQKLQKASMDSNNANATQSRSISRSGSFSSQLGNFFFSKNSKESSNSNSAGMSFSANSNGPSPNIKNPNVTNGSTPIPKPIRARQSSIYSASRQPTGSYTDNFYGSPSSVHDHLPPSQSVPRSQHSSIGDLKRFFKKSSNSNLSSNSNNVIPNGSPLSSGIAVPSHSHSSSHFAAGNNSYSTSYNGNGDTIYSHSHGGSGIPFSKRYIKTGADLGAGAGGSVKLAQRISDNKIFAVKEFRTKFENESKRDYVKKITSEYCIGTTLNHPNIIETIEIVYENDRILQVMEYCEYDLFAIVMSNKMSYEEICCCFKQILTGVQYLHSIGLAHRDLKLDNCVINEKGIVKLIDFGAAVVFSYPFSKNLVEASGIVGSDPYLAPEVCIFAKYDPRPVDIWSSAIIFACMILKKFPWKIPKLRDNSFKLFCSGRDCDSLSSLVTRTPDPPSYDESHSTEKKKPESSSNNVSDPNNVNIGPQRLLHSLPEETQHIVGRMIDLAPACRGNIEEIMEDPWIRSIDMCHLVEDGLSFKVVRGEDHHHTQVDQSEAHIAGLEKKKKKQNNQ</sequence>
<accession>P22211</accession>
<accession>D6W103</accession>
<reference key="1">
    <citation type="journal article" date="1990" name="Mol. Gen. Genet.">
        <title>The Saccharomyces cerevisiae NPR1 gene required for the activity of ammonia-sensitive amino acid permeases encodes a protein kinase homologue.</title>
        <authorList>
            <person name="Vandenbol M."/>
            <person name="Jauniaux J.-C."/>
            <person name="Grenson M."/>
        </authorList>
    </citation>
    <scope>NUCLEOTIDE SEQUENCE [GENOMIC DNA]</scope>
    <source>
        <strain>Sigma 1278B</strain>
    </source>
</reference>
<reference key="2">
    <citation type="journal article" date="1997" name="Nature">
        <title>The nucleotide sequence of Saccharomyces cerevisiae chromosome XIV and its evolutionary implications.</title>
        <authorList>
            <person name="Philippsen P."/>
            <person name="Kleine K."/>
            <person name="Poehlmann R."/>
            <person name="Duesterhoeft A."/>
            <person name="Hamberg K."/>
            <person name="Hegemann J.H."/>
            <person name="Obermaier B."/>
            <person name="Urrestarazu L.A."/>
            <person name="Aert R."/>
            <person name="Albermann K."/>
            <person name="Altmann R."/>
            <person name="Andre B."/>
            <person name="Baladron V."/>
            <person name="Ballesta J.P.G."/>
            <person name="Becam A.-M."/>
            <person name="Beinhauer J.D."/>
            <person name="Boskovic J."/>
            <person name="Buitrago M.J."/>
            <person name="Bussereau F."/>
            <person name="Coster F."/>
            <person name="Crouzet M."/>
            <person name="D'Angelo M."/>
            <person name="Dal Pero F."/>
            <person name="De Antoni A."/>
            <person name="del Rey F."/>
            <person name="Doignon F."/>
            <person name="Domdey H."/>
            <person name="Dubois E."/>
            <person name="Fiedler T.A."/>
            <person name="Fleig U."/>
            <person name="Floeth M."/>
            <person name="Fritz C."/>
            <person name="Gaillardin C."/>
            <person name="Garcia-Cantalejo J.M."/>
            <person name="Glansdorff N."/>
            <person name="Goffeau A."/>
            <person name="Gueldener U."/>
            <person name="Herbert C.J."/>
            <person name="Heumann K."/>
            <person name="Heuss-Neitzel D."/>
            <person name="Hilbert H."/>
            <person name="Hinni K."/>
            <person name="Iraqui Houssaini I."/>
            <person name="Jacquet M."/>
            <person name="Jimenez A."/>
            <person name="Jonniaux J.-L."/>
            <person name="Karpfinger-Hartl L."/>
            <person name="Lanfranchi G."/>
            <person name="Lepingle A."/>
            <person name="Levesque H."/>
            <person name="Lyck R."/>
            <person name="Maftahi M."/>
            <person name="Mallet L."/>
            <person name="Maurer C.T.C."/>
            <person name="Messenguy F."/>
            <person name="Mewes H.-W."/>
            <person name="Moestl D."/>
            <person name="Nasr F."/>
            <person name="Nicaud J.-M."/>
            <person name="Niedenthal R.K."/>
            <person name="Pandolfo D."/>
            <person name="Pierard A."/>
            <person name="Piravandi E."/>
            <person name="Planta R.J."/>
            <person name="Pohl T.M."/>
            <person name="Purnelle B."/>
            <person name="Rebischung C."/>
            <person name="Remacha M.A."/>
            <person name="Revuelta J.L."/>
            <person name="Rinke M."/>
            <person name="Saiz J.E."/>
            <person name="Sartorello F."/>
            <person name="Scherens B."/>
            <person name="Sen-Gupta M."/>
            <person name="Soler-Mira A."/>
            <person name="Urbanus J.H.M."/>
            <person name="Valle G."/>
            <person name="Van Dyck L."/>
            <person name="Verhasselt P."/>
            <person name="Vierendeels F."/>
            <person name="Vissers S."/>
            <person name="Voet M."/>
            <person name="Volckaert G."/>
            <person name="Wach A."/>
            <person name="Wambutt R."/>
            <person name="Wedler H."/>
            <person name="Zollner A."/>
            <person name="Hani J."/>
        </authorList>
    </citation>
    <scope>NUCLEOTIDE SEQUENCE [LARGE SCALE GENOMIC DNA]</scope>
    <source>
        <strain>ATCC 204508 / S288c</strain>
    </source>
</reference>
<reference key="3">
    <citation type="journal article" date="2014" name="G3 (Bethesda)">
        <title>The reference genome sequence of Saccharomyces cerevisiae: Then and now.</title>
        <authorList>
            <person name="Engel S.R."/>
            <person name="Dietrich F.S."/>
            <person name="Fisk D.G."/>
            <person name="Binkley G."/>
            <person name="Balakrishnan R."/>
            <person name="Costanzo M.C."/>
            <person name="Dwight S.S."/>
            <person name="Hitz B.C."/>
            <person name="Karra K."/>
            <person name="Nash R.S."/>
            <person name="Weng S."/>
            <person name="Wong E.D."/>
            <person name="Lloyd P."/>
            <person name="Skrzypek M.S."/>
            <person name="Miyasato S.R."/>
            <person name="Simison M."/>
            <person name="Cherry J.M."/>
        </authorList>
    </citation>
    <scope>GENOME REANNOTATION</scope>
    <source>
        <strain>ATCC 204508 / S288c</strain>
    </source>
</reference>
<reference key="4">
    <citation type="journal article" date="2008" name="Rapid Commun. Mass Spectrom.">
        <title>Identification of the rapamycin-sensitive phosphorylation sites within the Ser/Thr-rich domain of the yeast Npr1 protein kinase.</title>
        <authorList>
            <person name="Gander S."/>
            <person name="Bonenfant D."/>
            <person name="Altermatt P."/>
            <person name="Martin D.E."/>
            <person name="Hauri S."/>
            <person name="Moes S."/>
            <person name="Hall M.N."/>
            <person name="Jenoe P."/>
        </authorList>
    </citation>
    <scope>PROTEIN SEQUENCE OF 45-60; 63-120; 123-147; 255-269; 273-296; 315-362 AND 368-403</scope>
    <scope>PHOSPHORYLATION AT SER-47; SER-85; SER-90; SER-100; SER-111; SER-116; SER-125; SER-137; SER-141; SER-257; SER-259; SER-260; SER-288; SER-292; SER-317; SER-320; SER-328; SER-336; SER-353; SER-356; SER-357 AND SER-385</scope>
    <scope>IDENTIFICATION BY MASS SPECTROMETRY</scope>
    <scope>MUTAGENESIS OF SER-47; SER-257 AND SER-357</scope>
</reference>
<reference key="5">
    <citation type="journal article" date="1983" name="Eur. J. Biochem.">
        <title>Study of the positive control of the general amino-acid permease and other ammonia-sensitive uptake systems by the product of the NPR1 gene in the yeast Saccharomyces cerevisiae.</title>
        <authorList>
            <person name="Grenson M."/>
        </authorList>
    </citation>
    <scope>FUNCTION</scope>
</reference>
<reference key="6">
    <citation type="journal article" date="1998" name="EMBO J.">
        <title>The TOR nutrient signalling pathway phosphorylates NPR1 and inhibits turnover of the tryptophan permease.</title>
        <authorList>
            <person name="Schmidt A."/>
            <person name="Beck T."/>
            <person name="Koller A."/>
            <person name="Kunz J."/>
            <person name="Hall M.N."/>
        </authorList>
    </citation>
    <scope>FUNCTION</scope>
</reference>
<reference key="7">
    <citation type="journal article" date="2001" name="J. Biol. Chem.">
        <title>The Npr1 kinase controls biosynthetic and endocytic sorting of the yeast Gap1 permease.</title>
        <authorList>
            <person name="De Craene J.-O."/>
            <person name="Soetens O."/>
            <person name="Andre B."/>
        </authorList>
    </citation>
    <scope>FUNCTION</scope>
    <scope>SUBCELLULAR LOCATION</scope>
</reference>
<reference key="8">
    <citation type="journal article" date="2001" name="Mol. Cell">
        <title>TIP41 interacts with TAP42 and negatively regulates the TOR signaling pathway.</title>
        <authorList>
            <person name="Jacinto E."/>
            <person name="Guo B."/>
            <person name="Arndt K.T."/>
            <person name="Schmelzle T."/>
            <person name="Hall M.N."/>
        </authorList>
    </citation>
    <scope>INTERACTION WITH TIP41</scope>
</reference>
<reference key="9">
    <citation type="journal article" date="2003" name="Nature">
        <title>Global analysis of protein expression in yeast.</title>
        <authorList>
            <person name="Ghaemmaghami S."/>
            <person name="Huh W.-K."/>
            <person name="Bower K."/>
            <person name="Howson R.W."/>
            <person name="Belle A."/>
            <person name="Dephoure N."/>
            <person name="O'Shea E.K."/>
            <person name="Weissman J.S."/>
        </authorList>
    </citation>
    <scope>LEVEL OF PROTEIN EXPRESSION [LARGE SCALE ANALYSIS]</scope>
</reference>
<reference key="10">
    <citation type="journal article" date="2004" name="J. Biol. Chem.">
        <title>NPR1 kinase and RSP5-BUL1/2 ubiquitin ligase control GLN3-dependent transcription in Saccharomyces cerevisiae.</title>
        <authorList>
            <person name="Crespo J.L."/>
            <person name="Helliwell S.B."/>
            <person name="Wiederkehr C."/>
            <person name="Demougin P."/>
            <person name="Fowler B."/>
            <person name="Primig M."/>
            <person name="Hall M.N."/>
        </authorList>
    </citation>
    <scope>FUNCTION</scope>
</reference>
<reference key="11">
    <citation type="journal article" date="2006" name="J. Biol. Chem.">
        <title>Transduction of the nitrogen signal activating Gln3-mediated transcription is independent of Npr1 kinase and Rsp5-Bul1/2 ubiquitin ligase in Saccharomyces cerevisiae.</title>
        <authorList>
            <person name="Feller A."/>
            <person name="Boeckstaens M."/>
            <person name="Marini A.-M."/>
            <person name="Dubois E."/>
        </authorList>
    </citation>
    <scope>FUNCTION</scope>
</reference>
<reference key="12">
    <citation type="journal article" date="2006" name="J. Biol. Chem.">
        <title>Ammonia-specific regulation of Gln3 localization in Saccharomyces cerevisiae by protein kinase Npr1.</title>
        <authorList>
            <person name="Tate J.J."/>
            <person name="Rai R."/>
            <person name="Cooper T.G."/>
        </authorList>
    </citation>
    <scope>FUNCTION</scope>
</reference>
<reference key="13">
    <citation type="journal article" date="2007" name="J. Proteome Res.">
        <title>Large-scale phosphorylation analysis of alpha-factor-arrested Saccharomyces cerevisiae.</title>
        <authorList>
            <person name="Li X."/>
            <person name="Gerber S.A."/>
            <person name="Rudner A.D."/>
            <person name="Beausoleil S.A."/>
            <person name="Haas W."/>
            <person name="Villen J."/>
            <person name="Elias J.E."/>
            <person name="Gygi S.P."/>
        </authorList>
    </citation>
    <scope>PHOSPHORYLATION [LARGE SCALE ANALYSIS] AT SER-125 AND SER-357</scope>
    <scope>IDENTIFICATION BY MASS SPECTROMETRY [LARGE SCALE ANALYSIS]</scope>
    <source>
        <strain>ADR376</strain>
    </source>
</reference>
<reference key="14">
    <citation type="journal article" date="2007" name="Mol. Microbiol.">
        <title>The yeast ammonium transport protein Mep2 and its positive regulator, the Npr1 kinase, play an important role in normal and pseudohyphal growth on various nitrogen media through retrieval of excreted ammonium.</title>
        <authorList>
            <person name="Boeckstaens M."/>
            <person name="Andre B."/>
            <person name="Marini A.M."/>
        </authorList>
    </citation>
    <scope>FUNCTION</scope>
</reference>
<reference key="15">
    <citation type="journal article" date="2008" name="Mol. Cell. Proteomics">
        <title>A multidimensional chromatography technology for in-depth phosphoproteome analysis.</title>
        <authorList>
            <person name="Albuquerque C.P."/>
            <person name="Smolka M.B."/>
            <person name="Payne S.H."/>
            <person name="Bafna V."/>
            <person name="Eng J."/>
            <person name="Zhou H."/>
        </authorList>
    </citation>
    <scope>IDENTIFICATION BY MASS SPECTROMETRY [LARGE SCALE ANALYSIS]</scope>
</reference>
<reference key="16">
    <citation type="journal article" date="2009" name="Science">
        <title>Global analysis of Cdk1 substrate phosphorylation sites provides insights into evolution.</title>
        <authorList>
            <person name="Holt L.J."/>
            <person name="Tuch B.B."/>
            <person name="Villen J."/>
            <person name="Johnson A.D."/>
            <person name="Gygi S.P."/>
            <person name="Morgan D.O."/>
        </authorList>
    </citation>
    <scope>PHOSPHORYLATION [LARGE SCALE ANALYSIS] AT SER-125; SER-137; SER-141 AND TYR-334</scope>
    <scope>IDENTIFICATION BY MASS SPECTROMETRY [LARGE SCALE ANALYSIS]</scope>
</reference>
<dbReference type="EC" id="2.7.11.1"/>
<dbReference type="EMBL" id="X56084">
    <property type="protein sequence ID" value="CAA39564.1"/>
    <property type="molecule type" value="Genomic_DNA"/>
</dbReference>
<dbReference type="EMBL" id="Z71459">
    <property type="protein sequence ID" value="CAA96076.1"/>
    <property type="molecule type" value="Genomic_DNA"/>
</dbReference>
<dbReference type="EMBL" id="BK006947">
    <property type="protein sequence ID" value="DAA10369.1"/>
    <property type="molecule type" value="Genomic_DNA"/>
</dbReference>
<dbReference type="PIR" id="S63138">
    <property type="entry name" value="S63138"/>
</dbReference>
<dbReference type="RefSeq" id="NP_014216.1">
    <property type="nucleotide sequence ID" value="NM_001183021.1"/>
</dbReference>
<dbReference type="SMR" id="P22211"/>
<dbReference type="BioGRID" id="35649">
    <property type="interactions" value="179"/>
</dbReference>
<dbReference type="DIP" id="DIP-4327N"/>
<dbReference type="FunCoup" id="P22211">
    <property type="interactions" value="415"/>
</dbReference>
<dbReference type="IntAct" id="P22211">
    <property type="interactions" value="59"/>
</dbReference>
<dbReference type="MINT" id="P22211"/>
<dbReference type="STRING" id="4932.YNL183C"/>
<dbReference type="GlyGen" id="P22211">
    <property type="glycosylation" value="1 site, 1 O-linked glycan (1 site)"/>
</dbReference>
<dbReference type="iPTMnet" id="P22211"/>
<dbReference type="PaxDb" id="4932-YNL183C"/>
<dbReference type="PeptideAtlas" id="P22211"/>
<dbReference type="EnsemblFungi" id="YNL183C_mRNA">
    <property type="protein sequence ID" value="YNL183C"/>
    <property type="gene ID" value="YNL183C"/>
</dbReference>
<dbReference type="GeneID" id="855538"/>
<dbReference type="KEGG" id="sce:YNL183C"/>
<dbReference type="AGR" id="SGD:S000005127"/>
<dbReference type="SGD" id="S000005127">
    <property type="gene designation" value="NPR1"/>
</dbReference>
<dbReference type="VEuPathDB" id="FungiDB:YNL183C"/>
<dbReference type="eggNOG" id="KOG0590">
    <property type="taxonomic scope" value="Eukaryota"/>
</dbReference>
<dbReference type="GeneTree" id="ENSGT00940000176633"/>
<dbReference type="HOGENOM" id="CLU_000288_82_4_1"/>
<dbReference type="InParanoid" id="P22211"/>
<dbReference type="OMA" id="LQVMEYC"/>
<dbReference type="OrthoDB" id="6513151at2759"/>
<dbReference type="BioCyc" id="YEAST:G3O-33194-MONOMER"/>
<dbReference type="BRENDA" id="2.7.11.1">
    <property type="organism ID" value="984"/>
</dbReference>
<dbReference type="BioGRID-ORCS" id="855538">
    <property type="hits" value="1 hit in 13 CRISPR screens"/>
</dbReference>
<dbReference type="PRO" id="PR:P22211"/>
<dbReference type="Proteomes" id="UP000002311">
    <property type="component" value="Chromosome XIV"/>
</dbReference>
<dbReference type="RNAct" id="P22211">
    <property type="molecule type" value="protein"/>
</dbReference>
<dbReference type="GO" id="GO:0005737">
    <property type="term" value="C:cytoplasm"/>
    <property type="evidence" value="ECO:0000314"/>
    <property type="project" value="SGD"/>
</dbReference>
<dbReference type="GO" id="GO:0005829">
    <property type="term" value="C:cytosol"/>
    <property type="evidence" value="ECO:0007005"/>
    <property type="project" value="SGD"/>
</dbReference>
<dbReference type="GO" id="GO:0005794">
    <property type="term" value="C:Golgi apparatus"/>
    <property type="evidence" value="ECO:0000314"/>
    <property type="project" value="SGD"/>
</dbReference>
<dbReference type="GO" id="GO:0005886">
    <property type="term" value="C:plasma membrane"/>
    <property type="evidence" value="ECO:0000314"/>
    <property type="project" value="SGD"/>
</dbReference>
<dbReference type="GO" id="GO:0005524">
    <property type="term" value="F:ATP binding"/>
    <property type="evidence" value="ECO:0007669"/>
    <property type="project" value="UniProtKB-KW"/>
</dbReference>
<dbReference type="GO" id="GO:0106310">
    <property type="term" value="F:protein serine kinase activity"/>
    <property type="evidence" value="ECO:0007669"/>
    <property type="project" value="RHEA"/>
</dbReference>
<dbReference type="GO" id="GO:0004674">
    <property type="term" value="F:protein serine/threonine kinase activity"/>
    <property type="evidence" value="ECO:0000314"/>
    <property type="project" value="SGD"/>
</dbReference>
<dbReference type="GO" id="GO:0045806">
    <property type="term" value="P:negative regulation of endocytosis"/>
    <property type="evidence" value="ECO:0000315"/>
    <property type="project" value="SGD"/>
</dbReference>
<dbReference type="GO" id="GO:0090153">
    <property type="term" value="P:regulation of sphingolipid biosynthetic process"/>
    <property type="evidence" value="ECO:0000315"/>
    <property type="project" value="SGD"/>
</dbReference>
<dbReference type="FunFam" id="3.30.200.20:FF:000714">
    <property type="entry name" value="Nitrogen permease regulator"/>
    <property type="match status" value="1"/>
</dbReference>
<dbReference type="FunFam" id="1.10.510.10:FF:000919">
    <property type="entry name" value="NPR1p Protein kinase"/>
    <property type="match status" value="1"/>
</dbReference>
<dbReference type="Gene3D" id="3.30.200.20">
    <property type="entry name" value="Phosphorylase Kinase, domain 1"/>
    <property type="match status" value="1"/>
</dbReference>
<dbReference type="Gene3D" id="1.10.510.10">
    <property type="entry name" value="Transferase(Phosphotransferase) domain 1"/>
    <property type="match status" value="1"/>
</dbReference>
<dbReference type="InterPro" id="IPR011009">
    <property type="entry name" value="Kinase-like_dom_sf"/>
</dbReference>
<dbReference type="InterPro" id="IPR000719">
    <property type="entry name" value="Prot_kinase_dom"/>
</dbReference>
<dbReference type="InterPro" id="IPR017441">
    <property type="entry name" value="Protein_kinase_ATP_BS"/>
</dbReference>
<dbReference type="InterPro" id="IPR008271">
    <property type="entry name" value="Ser/Thr_kinase_AS"/>
</dbReference>
<dbReference type="PANTHER" id="PTHR24343:SF113">
    <property type="entry name" value="NITROGEN PERMEASE REACTIVATOR PROTEIN-RELATED"/>
    <property type="match status" value="1"/>
</dbReference>
<dbReference type="PANTHER" id="PTHR24343">
    <property type="entry name" value="SERINE/THREONINE KINASE"/>
    <property type="match status" value="1"/>
</dbReference>
<dbReference type="Pfam" id="PF00069">
    <property type="entry name" value="Pkinase"/>
    <property type="match status" value="1"/>
</dbReference>
<dbReference type="SMART" id="SM00220">
    <property type="entry name" value="S_TKc"/>
    <property type="match status" value="1"/>
</dbReference>
<dbReference type="SUPFAM" id="SSF56112">
    <property type="entry name" value="Protein kinase-like (PK-like)"/>
    <property type="match status" value="1"/>
</dbReference>
<dbReference type="PROSITE" id="PS00107">
    <property type="entry name" value="PROTEIN_KINASE_ATP"/>
    <property type="match status" value="1"/>
</dbReference>
<dbReference type="PROSITE" id="PS50011">
    <property type="entry name" value="PROTEIN_KINASE_DOM"/>
    <property type="match status" value="1"/>
</dbReference>
<dbReference type="PROSITE" id="PS00108">
    <property type="entry name" value="PROTEIN_KINASE_ST"/>
    <property type="match status" value="1"/>
</dbReference>
<gene>
    <name type="primary">NPR1</name>
    <name type="ordered locus">YNL183C</name>
    <name type="ORF">N1631</name>
</gene>
<protein>
    <recommendedName>
        <fullName>Nitrogen permease reactivator protein</fullName>
        <ecNumber>2.7.11.1</ecNumber>
    </recommendedName>
    <alternativeName>
        <fullName>Serine/threonine-protein kinase NPR1</fullName>
    </alternativeName>
</protein>
<organism>
    <name type="scientific">Saccharomyces cerevisiae (strain ATCC 204508 / S288c)</name>
    <name type="common">Baker's yeast</name>
    <dbReference type="NCBI Taxonomy" id="559292"/>
    <lineage>
        <taxon>Eukaryota</taxon>
        <taxon>Fungi</taxon>
        <taxon>Dikarya</taxon>
        <taxon>Ascomycota</taxon>
        <taxon>Saccharomycotina</taxon>
        <taxon>Saccharomycetes</taxon>
        <taxon>Saccharomycetales</taxon>
        <taxon>Saccharomycetaceae</taxon>
        <taxon>Saccharomyces</taxon>
    </lineage>
</organism>
<proteinExistence type="evidence at protein level"/>
<name>NPR1_YEAST</name>
<evidence type="ECO:0000255" key="1">
    <source>
        <dbReference type="PROSITE-ProRule" id="PRU00159"/>
    </source>
</evidence>
<evidence type="ECO:0000255" key="2">
    <source>
        <dbReference type="PROSITE-ProRule" id="PRU10027"/>
    </source>
</evidence>
<evidence type="ECO:0000256" key="3">
    <source>
        <dbReference type="SAM" id="MobiDB-lite"/>
    </source>
</evidence>
<evidence type="ECO:0000269" key="4">
    <source>
    </source>
</evidence>
<evidence type="ECO:0000269" key="5">
    <source>
    </source>
</evidence>
<evidence type="ECO:0000269" key="6">
    <source>
    </source>
</evidence>
<evidence type="ECO:0000269" key="7">
    <source>
    </source>
</evidence>
<evidence type="ECO:0000269" key="8">
    <source>
    </source>
</evidence>
<evidence type="ECO:0000269" key="9">
    <source>
    </source>
</evidence>
<evidence type="ECO:0000269" key="10">
    <source>
    </source>
</evidence>
<evidence type="ECO:0000269" key="11">
    <source>
    </source>
</evidence>
<evidence type="ECO:0000269" key="12">
    <source>
    </source>
</evidence>
<evidence type="ECO:0000269" key="13">
    <source>
    </source>
</evidence>
<evidence type="ECO:0000305" key="14"/>
<evidence type="ECO:0007744" key="15">
    <source>
    </source>
</evidence>
<evidence type="ECO:0007744" key="16">
    <source>
    </source>
</evidence>
<feature type="chain" id="PRO_0000086445" description="Nitrogen permease reactivator protein">
    <location>
        <begin position="1"/>
        <end position="790"/>
    </location>
</feature>
<feature type="domain" description="Protein kinase" evidence="1">
    <location>
        <begin position="438"/>
        <end position="742"/>
    </location>
</feature>
<feature type="region of interest" description="Disordered" evidence="3">
    <location>
        <begin position="1"/>
        <end position="68"/>
    </location>
</feature>
<feature type="region of interest" description="Disordered" evidence="3">
    <location>
        <begin position="151"/>
        <end position="188"/>
    </location>
</feature>
<feature type="region of interest" description="Disordered" evidence="3">
    <location>
        <begin position="234"/>
        <end position="258"/>
    </location>
</feature>
<feature type="region of interest" description="Disordered" evidence="3">
    <location>
        <begin position="276"/>
        <end position="357"/>
    </location>
</feature>
<feature type="region of interest" description="Disordered" evidence="3">
    <location>
        <begin position="666"/>
        <end position="704"/>
    </location>
</feature>
<feature type="region of interest" description="Disordered" evidence="3">
    <location>
        <begin position="766"/>
        <end position="790"/>
    </location>
</feature>
<feature type="compositionally biased region" description="Polar residues" evidence="3">
    <location>
        <begin position="16"/>
        <end position="38"/>
    </location>
</feature>
<feature type="compositionally biased region" description="Low complexity" evidence="3">
    <location>
        <begin position="46"/>
        <end position="58"/>
    </location>
</feature>
<feature type="compositionally biased region" description="Polar residues" evidence="3">
    <location>
        <begin position="151"/>
        <end position="175"/>
    </location>
</feature>
<feature type="compositionally biased region" description="Low complexity" evidence="3">
    <location>
        <begin position="176"/>
        <end position="188"/>
    </location>
</feature>
<feature type="compositionally biased region" description="Polar residues" evidence="3">
    <location>
        <begin position="238"/>
        <end position="248"/>
    </location>
</feature>
<feature type="compositionally biased region" description="Low complexity" evidence="3">
    <location>
        <begin position="249"/>
        <end position="258"/>
    </location>
</feature>
<feature type="compositionally biased region" description="Low complexity" evidence="3">
    <location>
        <begin position="276"/>
        <end position="289"/>
    </location>
</feature>
<feature type="compositionally biased region" description="Polar residues" evidence="3">
    <location>
        <begin position="290"/>
        <end position="305"/>
    </location>
</feature>
<feature type="compositionally biased region" description="Polar residues" evidence="3">
    <location>
        <begin position="314"/>
        <end position="339"/>
    </location>
</feature>
<feature type="compositionally biased region" description="Polar residues" evidence="3">
    <location>
        <begin position="346"/>
        <end position="357"/>
    </location>
</feature>
<feature type="compositionally biased region" description="Basic and acidic residues" evidence="3">
    <location>
        <begin position="677"/>
        <end position="688"/>
    </location>
</feature>
<feature type="compositionally biased region" description="Low complexity" evidence="3">
    <location>
        <begin position="689"/>
        <end position="701"/>
    </location>
</feature>
<feature type="active site" description="Proton acceptor" evidence="1 2">
    <location>
        <position position="561"/>
    </location>
</feature>
<feature type="binding site" evidence="1">
    <location>
        <begin position="444"/>
        <end position="452"/>
    </location>
    <ligand>
        <name>ATP</name>
        <dbReference type="ChEBI" id="CHEBI:30616"/>
    </ligand>
</feature>
<feature type="binding site" evidence="1">
    <location>
        <position position="467"/>
    </location>
    <ligand>
        <name>ATP</name>
        <dbReference type="ChEBI" id="CHEBI:30616"/>
    </ligand>
</feature>
<feature type="modified residue" description="Phosphoserine; by autocatalysis" evidence="11">
    <location>
        <position position="47"/>
    </location>
</feature>
<feature type="modified residue" description="Phosphoserine" evidence="11">
    <location>
        <position position="85"/>
    </location>
</feature>
<feature type="modified residue" description="Phosphoserine" evidence="11">
    <location>
        <position position="90"/>
    </location>
</feature>
<feature type="modified residue" description="Phosphoserine" evidence="11">
    <location>
        <position position="100"/>
    </location>
</feature>
<feature type="modified residue" description="Phosphoserine" evidence="11">
    <location>
        <position position="111"/>
    </location>
</feature>
<feature type="modified residue" description="Phosphoserine" evidence="11">
    <location>
        <position position="116"/>
    </location>
</feature>
<feature type="modified residue" description="Phosphoserine" evidence="11 15 16">
    <location>
        <position position="125"/>
    </location>
</feature>
<feature type="modified residue" description="Phosphoserine" evidence="11 16">
    <location>
        <position position="137"/>
    </location>
</feature>
<feature type="modified residue" description="Phosphoserine" evidence="11 16">
    <location>
        <position position="141"/>
    </location>
</feature>
<feature type="modified residue" description="Phosphoserine; by autocatalysis" evidence="11">
    <location>
        <position position="257"/>
    </location>
</feature>
<feature type="modified residue" description="Phosphoserine" evidence="11">
    <location>
        <position position="259"/>
    </location>
</feature>
<feature type="modified residue" description="Phosphoserine" evidence="11">
    <location>
        <position position="260"/>
    </location>
</feature>
<feature type="modified residue" description="Phosphoserine" evidence="11">
    <location>
        <position position="288"/>
    </location>
</feature>
<feature type="modified residue" description="Phosphoserine" evidence="11">
    <location>
        <position position="292"/>
    </location>
</feature>
<feature type="modified residue" description="Phosphoserine" evidence="11">
    <location>
        <position position="317"/>
    </location>
</feature>
<feature type="modified residue" description="Phosphoserine" evidence="11">
    <location>
        <position position="320"/>
    </location>
</feature>
<feature type="modified residue" description="Phosphoserine" evidence="11">
    <location>
        <position position="328"/>
    </location>
</feature>
<feature type="modified residue" description="Phosphotyrosine" evidence="16">
    <location>
        <position position="334"/>
    </location>
</feature>
<feature type="modified residue" description="Phosphoserine" evidence="11">
    <location>
        <position position="336"/>
    </location>
</feature>
<feature type="modified residue" description="Phosphoserine" evidence="11">
    <location>
        <position position="353"/>
    </location>
</feature>
<feature type="modified residue" description="Phosphoserine" evidence="11">
    <location>
        <position position="356"/>
    </location>
</feature>
<feature type="modified residue" description="Phosphoserine; by autocatalysis" evidence="11 15">
    <location>
        <position position="357"/>
    </location>
</feature>
<feature type="modified residue" description="Phosphoserine" evidence="11">
    <location>
        <position position="385"/>
    </location>
</feature>
<feature type="mutagenesis site" description="Abolishes autophosphorylation; when associated with A-257 and A-357." evidence="11">
    <original>S</original>
    <variation>A</variation>
    <location>
        <position position="47"/>
    </location>
</feature>
<feature type="mutagenesis site" description="Abolishes autophosphorylation; when associated with A-47 and A-357." evidence="11">
    <original>S</original>
    <variation>A</variation>
    <location>
        <position position="257"/>
    </location>
</feature>
<feature type="mutagenesis site" description="Abolishes autophosphorylation." evidence="11">
    <original>S</original>
    <variation>D</variation>
    <location>
        <position position="257"/>
    </location>
</feature>
<feature type="mutagenesis site" description="Abolishes autophosphorylation; when associated with A-47 and A-257." evidence="11">
    <original>S</original>
    <variation>A</variation>
    <location>
        <position position="357"/>
    </location>
</feature>
<feature type="sequence conflict" description="In Ref. 1; CAA39564." evidence="14" ref="1">
    <original>T</original>
    <variation>A</variation>
    <location>
        <position position="154"/>
    </location>
</feature>
<feature type="sequence conflict" description="In Ref. 1; CAA39564." evidence="14" ref="1">
    <original>S</original>
    <variation>P</variation>
    <location>
        <position position="277"/>
    </location>
</feature>
<keyword id="KW-0067">ATP-binding</keyword>
<keyword id="KW-0963">Cytoplasm</keyword>
<keyword id="KW-0903">Direct protein sequencing</keyword>
<keyword id="KW-0418">Kinase</keyword>
<keyword id="KW-0547">Nucleotide-binding</keyword>
<keyword id="KW-0597">Phosphoprotein</keyword>
<keyword id="KW-1185">Reference proteome</keyword>
<keyword id="KW-0723">Serine/threonine-protein kinase</keyword>
<keyword id="KW-0808">Transferase</keyword>